<accession>P0A5J9</accession>
<accession>A0A1R3Y3W6</accession>
<accession>O53391</accession>
<accession>X2BNP0</accession>
<reference key="1">
    <citation type="journal article" date="2003" name="Proc. Natl. Acad. Sci. U.S.A.">
        <title>The complete genome sequence of Mycobacterium bovis.</title>
        <authorList>
            <person name="Garnier T."/>
            <person name="Eiglmeier K."/>
            <person name="Camus J.-C."/>
            <person name="Medina N."/>
            <person name="Mansoor H."/>
            <person name="Pryor M."/>
            <person name="Duthoy S."/>
            <person name="Grondin S."/>
            <person name="Lacroix C."/>
            <person name="Monsempe C."/>
            <person name="Simon S."/>
            <person name="Harris B."/>
            <person name="Atkin R."/>
            <person name="Doggett J."/>
            <person name="Mayes R."/>
            <person name="Keating L."/>
            <person name="Wheeler P.R."/>
            <person name="Parkhill J."/>
            <person name="Barrell B.G."/>
            <person name="Cole S.T."/>
            <person name="Gordon S.V."/>
            <person name="Hewinson R.G."/>
        </authorList>
    </citation>
    <scope>NUCLEOTIDE SEQUENCE [LARGE SCALE GENOMIC DNA]</scope>
    <source>
        <strain>ATCC BAA-935 / AF2122/97</strain>
    </source>
</reference>
<reference key="2">
    <citation type="journal article" date="2017" name="Genome Announc.">
        <title>Updated reference genome sequence and annotation of Mycobacterium bovis AF2122/97.</title>
        <authorList>
            <person name="Malone K.M."/>
            <person name="Farrell D."/>
            <person name="Stuber T.P."/>
            <person name="Schubert O.T."/>
            <person name="Aebersold R."/>
            <person name="Robbe-Austerman S."/>
            <person name="Gordon S.V."/>
        </authorList>
    </citation>
    <scope>NUCLEOTIDE SEQUENCE [LARGE SCALE GENOMIC DNA]</scope>
    <scope>GENOME REANNOTATION</scope>
    <source>
        <strain>ATCC BAA-935 / AF2122/97</strain>
    </source>
</reference>
<proteinExistence type="inferred from homology"/>
<organism>
    <name type="scientific">Mycobacterium bovis (strain ATCC BAA-935 / AF2122/97)</name>
    <dbReference type="NCBI Taxonomy" id="233413"/>
    <lineage>
        <taxon>Bacteria</taxon>
        <taxon>Bacillati</taxon>
        <taxon>Actinomycetota</taxon>
        <taxon>Actinomycetes</taxon>
        <taxon>Mycobacteriales</taxon>
        <taxon>Mycobacteriaceae</taxon>
        <taxon>Mycobacterium</taxon>
        <taxon>Mycobacterium tuberculosis complex</taxon>
    </lineage>
</organism>
<gene>
    <name evidence="1" type="primary">metXA</name>
    <name type="synonym">metA</name>
    <name type="ordered locus">BQ2027_MB3373</name>
</gene>
<protein>
    <recommendedName>
        <fullName evidence="1">Homoserine O-acetyltransferase</fullName>
        <shortName evidence="1">HAT</shortName>
        <ecNumber evidence="1">2.3.1.31</ecNumber>
    </recommendedName>
    <alternativeName>
        <fullName evidence="1">Homoserine transacetylase</fullName>
        <shortName evidence="1">HTA</shortName>
    </alternativeName>
</protein>
<sequence>MTISDVPTQTLPAEGEIGLIDVGSLQLESGAVIDDVCIAVQRWGKLSPARDNVVVVLHALTGDSHITGPAGPGHPTPGWWDGVAGPGAPIDTTRWCAVATNVLGGCRGSTGPSSLARDGKPWGSRFPLISIRDQVQADVAALAALGITEVAAVVGGSMGGARALEWVVGYPDRVRAGLLLAVGARATADQIGTQTTQIAAIKADPDWQSGDYHETGRAPDAGLRLARRFAHLTYRGEIELDTRFANHNQGNEDPTAGGRYAVQSYLEHQGDKLLSRFDAGSYVILTEALNSHDVGRGRGGVSAALRACPVPVVVGGITSDRLYPLRLQQELADLLPGCAGLRVVESVYGHDGFLVETEAVGELIRQTLGLADREGACRR</sequence>
<evidence type="ECO:0000255" key="1">
    <source>
        <dbReference type="HAMAP-Rule" id="MF_00296"/>
    </source>
</evidence>
<dbReference type="EC" id="2.3.1.31" evidence="1"/>
<dbReference type="EMBL" id="LT708304">
    <property type="protein sequence ID" value="SIU02002.1"/>
    <property type="molecule type" value="Genomic_DNA"/>
</dbReference>
<dbReference type="RefSeq" id="NP_857018.1">
    <property type="nucleotide sequence ID" value="NC_002945.3"/>
</dbReference>
<dbReference type="SMR" id="P0A5J9"/>
<dbReference type="ESTHER" id="myctu-metx">
    <property type="family name" value="Homoserine_transacetylase"/>
</dbReference>
<dbReference type="KEGG" id="mbo:BQ2027_MB3373"/>
<dbReference type="PATRIC" id="fig|233413.5.peg.3706"/>
<dbReference type="UniPathway" id="UPA00051">
    <property type="reaction ID" value="UER00074"/>
</dbReference>
<dbReference type="Proteomes" id="UP000001419">
    <property type="component" value="Chromosome"/>
</dbReference>
<dbReference type="GO" id="GO:0005737">
    <property type="term" value="C:cytoplasm"/>
    <property type="evidence" value="ECO:0007669"/>
    <property type="project" value="UniProtKB-SubCell"/>
</dbReference>
<dbReference type="GO" id="GO:0004414">
    <property type="term" value="F:homoserine O-acetyltransferase activity"/>
    <property type="evidence" value="ECO:0007669"/>
    <property type="project" value="UniProtKB-UniRule"/>
</dbReference>
<dbReference type="GO" id="GO:0009092">
    <property type="term" value="P:homoserine metabolic process"/>
    <property type="evidence" value="ECO:0007669"/>
    <property type="project" value="TreeGrafter"/>
</dbReference>
<dbReference type="GO" id="GO:0009086">
    <property type="term" value="P:methionine biosynthetic process"/>
    <property type="evidence" value="ECO:0007669"/>
    <property type="project" value="UniProtKB-UniRule"/>
</dbReference>
<dbReference type="FunFam" id="3.40.50.1820:FF:000324">
    <property type="entry name" value="Homoserine O-acetyltransferase"/>
    <property type="match status" value="1"/>
</dbReference>
<dbReference type="Gene3D" id="3.40.50.1820">
    <property type="entry name" value="alpha/beta hydrolase"/>
    <property type="match status" value="1"/>
</dbReference>
<dbReference type="HAMAP" id="MF_00296">
    <property type="entry name" value="MetX_acyltransf"/>
    <property type="match status" value="1"/>
</dbReference>
<dbReference type="InterPro" id="IPR000073">
    <property type="entry name" value="AB_hydrolase_1"/>
</dbReference>
<dbReference type="InterPro" id="IPR029058">
    <property type="entry name" value="AB_hydrolase_fold"/>
</dbReference>
<dbReference type="InterPro" id="IPR008220">
    <property type="entry name" value="HAT_MetX-like"/>
</dbReference>
<dbReference type="NCBIfam" id="TIGR01392">
    <property type="entry name" value="homoserO_Ac_trn"/>
    <property type="match status" value="1"/>
</dbReference>
<dbReference type="NCBIfam" id="NF001209">
    <property type="entry name" value="PRK00175.1"/>
    <property type="match status" value="1"/>
</dbReference>
<dbReference type="PANTHER" id="PTHR32268">
    <property type="entry name" value="HOMOSERINE O-ACETYLTRANSFERASE"/>
    <property type="match status" value="1"/>
</dbReference>
<dbReference type="PANTHER" id="PTHR32268:SF11">
    <property type="entry name" value="HOMOSERINE O-ACETYLTRANSFERASE"/>
    <property type="match status" value="1"/>
</dbReference>
<dbReference type="Pfam" id="PF00561">
    <property type="entry name" value="Abhydrolase_1"/>
    <property type="match status" value="1"/>
</dbReference>
<dbReference type="PIRSF" id="PIRSF000443">
    <property type="entry name" value="Homoser_Ac_trans"/>
    <property type="match status" value="1"/>
</dbReference>
<dbReference type="SUPFAM" id="SSF53474">
    <property type="entry name" value="alpha/beta-Hydrolases"/>
    <property type="match status" value="1"/>
</dbReference>
<comment type="function">
    <text evidence="1">Transfers an acetyl group from acetyl-CoA to L-homoserine, forming acetyl-L-homoserine.</text>
</comment>
<comment type="catalytic activity">
    <reaction evidence="1">
        <text>L-homoserine + acetyl-CoA = O-acetyl-L-homoserine + CoA</text>
        <dbReference type="Rhea" id="RHEA:13701"/>
        <dbReference type="ChEBI" id="CHEBI:57287"/>
        <dbReference type="ChEBI" id="CHEBI:57288"/>
        <dbReference type="ChEBI" id="CHEBI:57476"/>
        <dbReference type="ChEBI" id="CHEBI:57716"/>
        <dbReference type="EC" id="2.3.1.31"/>
    </reaction>
</comment>
<comment type="pathway">
    <text evidence="1">Amino-acid biosynthesis; L-methionine biosynthesis via de novo pathway; O-acetyl-L-homoserine from L-homoserine: step 1/1.</text>
</comment>
<comment type="subunit">
    <text evidence="1">Homodimer.</text>
</comment>
<comment type="subcellular location">
    <subcellularLocation>
        <location evidence="1">Cytoplasm</location>
    </subcellularLocation>
</comment>
<comment type="similarity">
    <text evidence="1">Belongs to the AB hydrolase superfamily. MetX family.</text>
</comment>
<keyword id="KW-0012">Acyltransferase</keyword>
<keyword id="KW-0028">Amino-acid biosynthesis</keyword>
<keyword id="KW-0963">Cytoplasm</keyword>
<keyword id="KW-0486">Methionine biosynthesis</keyword>
<keyword id="KW-1185">Reference proteome</keyword>
<keyword id="KW-0808">Transferase</keyword>
<name>METXA_MYCBO</name>
<feature type="chain" id="PRO_0000155728" description="Homoserine O-acetyltransferase">
    <location>
        <begin position="1"/>
        <end position="379"/>
    </location>
</feature>
<feature type="domain" description="AB hydrolase-1" evidence="1">
    <location>
        <begin position="52"/>
        <end position="356"/>
    </location>
</feature>
<feature type="active site" description="Nucleophile" evidence="1">
    <location>
        <position position="157"/>
    </location>
</feature>
<feature type="active site" evidence="1">
    <location>
        <position position="320"/>
    </location>
</feature>
<feature type="active site" evidence="1">
    <location>
        <position position="350"/>
    </location>
</feature>
<feature type="binding site" evidence="1">
    <location>
        <position position="227"/>
    </location>
    <ligand>
        <name>substrate</name>
    </ligand>
</feature>
<feature type="binding site" evidence="1">
    <location>
        <position position="351"/>
    </location>
    <ligand>
        <name>substrate</name>
    </ligand>
</feature>